<reference key="1">
    <citation type="submission" date="2002-12" db="EMBL/GenBank/DDBJ databases">
        <title>Rice ARF family gene.</title>
        <authorList>
            <person name="Qian X."/>
            <person name="Liu J."/>
            <person name="Yang J."/>
        </authorList>
    </citation>
    <scope>NUCLEOTIDE SEQUENCE [MRNA]</scope>
</reference>
<reference key="2">
    <citation type="journal article" date="2005" name="PLoS Biol.">
        <title>The genomes of Oryza sativa: a history of duplications.</title>
        <authorList>
            <person name="Yu J."/>
            <person name="Wang J."/>
            <person name="Lin W."/>
            <person name="Li S."/>
            <person name="Li H."/>
            <person name="Zhou J."/>
            <person name="Ni P."/>
            <person name="Dong W."/>
            <person name="Hu S."/>
            <person name="Zeng C."/>
            <person name="Zhang J."/>
            <person name="Zhang Y."/>
            <person name="Li R."/>
            <person name="Xu Z."/>
            <person name="Li S."/>
            <person name="Li X."/>
            <person name="Zheng H."/>
            <person name="Cong L."/>
            <person name="Lin L."/>
            <person name="Yin J."/>
            <person name="Geng J."/>
            <person name="Li G."/>
            <person name="Shi J."/>
            <person name="Liu J."/>
            <person name="Lv H."/>
            <person name="Li J."/>
            <person name="Wang J."/>
            <person name="Deng Y."/>
            <person name="Ran L."/>
            <person name="Shi X."/>
            <person name="Wang X."/>
            <person name="Wu Q."/>
            <person name="Li C."/>
            <person name="Ren X."/>
            <person name="Wang J."/>
            <person name="Wang X."/>
            <person name="Li D."/>
            <person name="Liu D."/>
            <person name="Zhang X."/>
            <person name="Ji Z."/>
            <person name="Zhao W."/>
            <person name="Sun Y."/>
            <person name="Zhang Z."/>
            <person name="Bao J."/>
            <person name="Han Y."/>
            <person name="Dong L."/>
            <person name="Ji J."/>
            <person name="Chen P."/>
            <person name="Wu S."/>
            <person name="Liu J."/>
            <person name="Xiao Y."/>
            <person name="Bu D."/>
            <person name="Tan J."/>
            <person name="Yang L."/>
            <person name="Ye C."/>
            <person name="Zhang J."/>
            <person name="Xu J."/>
            <person name="Zhou Y."/>
            <person name="Yu Y."/>
            <person name="Zhang B."/>
            <person name="Zhuang S."/>
            <person name="Wei H."/>
            <person name="Liu B."/>
            <person name="Lei M."/>
            <person name="Yu H."/>
            <person name="Li Y."/>
            <person name="Xu H."/>
            <person name="Wei S."/>
            <person name="He X."/>
            <person name="Fang L."/>
            <person name="Zhang Z."/>
            <person name="Zhang Y."/>
            <person name="Huang X."/>
            <person name="Su Z."/>
            <person name="Tong W."/>
            <person name="Li J."/>
            <person name="Tong Z."/>
            <person name="Li S."/>
            <person name="Ye J."/>
            <person name="Wang L."/>
            <person name="Fang L."/>
            <person name="Lei T."/>
            <person name="Chen C.-S."/>
            <person name="Chen H.-C."/>
            <person name="Xu Z."/>
            <person name="Li H."/>
            <person name="Huang H."/>
            <person name="Zhang F."/>
            <person name="Xu H."/>
            <person name="Li N."/>
            <person name="Zhao C."/>
            <person name="Li S."/>
            <person name="Dong L."/>
            <person name="Huang Y."/>
            <person name="Li L."/>
            <person name="Xi Y."/>
            <person name="Qi Q."/>
            <person name="Li W."/>
            <person name="Zhang B."/>
            <person name="Hu W."/>
            <person name="Zhang Y."/>
            <person name="Tian X."/>
            <person name="Jiao Y."/>
            <person name="Liang X."/>
            <person name="Jin J."/>
            <person name="Gao L."/>
            <person name="Zheng W."/>
            <person name="Hao B."/>
            <person name="Liu S.-M."/>
            <person name="Wang W."/>
            <person name="Yuan L."/>
            <person name="Cao M."/>
            <person name="McDermott J."/>
            <person name="Samudrala R."/>
            <person name="Wang J."/>
            <person name="Wong G.K.-S."/>
            <person name="Yang H."/>
        </authorList>
    </citation>
    <scope>NUCLEOTIDE SEQUENCE [LARGE SCALE GENOMIC DNA]</scope>
    <source>
        <strain>cv. 93-11</strain>
    </source>
</reference>
<reference key="3">
    <citation type="journal article" date="2007" name="Gene">
        <title>Genome-wide analysis of the auxin response factors (ARF) gene family in rice (Oryza sativa).</title>
        <authorList>
            <person name="Wang D."/>
            <person name="Pei K."/>
            <person name="Fu Y."/>
            <person name="Sun Z."/>
            <person name="Li S."/>
            <person name="Liu H."/>
            <person name="Tang K."/>
            <person name="Han B."/>
            <person name="Tao Y."/>
        </authorList>
    </citation>
    <scope>GENE FAMILY</scope>
    <scope>NOMENCLATURE</scope>
</reference>
<evidence type="ECO:0000250" key="1"/>
<evidence type="ECO:0000255" key="2">
    <source>
        <dbReference type="PROSITE-ProRule" id="PRU00326"/>
    </source>
</evidence>
<evidence type="ECO:0000255" key="3">
    <source>
        <dbReference type="PROSITE-ProRule" id="PRU01081"/>
    </source>
</evidence>
<evidence type="ECO:0000256" key="4">
    <source>
        <dbReference type="SAM" id="MobiDB-lite"/>
    </source>
</evidence>
<evidence type="ECO:0000305" key="5"/>
<gene>
    <name type="primary">ARF23</name>
    <name type="synonym">ARF1</name>
    <name type="ORF">OsI_035079</name>
</gene>
<protein>
    <recommendedName>
        <fullName>Auxin response factor 23</fullName>
    </recommendedName>
    <alternativeName>
        <fullName>OsARF1</fullName>
    </alternativeName>
</protein>
<keyword id="KW-0927">Auxin signaling pathway</keyword>
<keyword id="KW-0238">DNA-binding</keyword>
<keyword id="KW-0539">Nucleus</keyword>
<keyword id="KW-1185">Reference proteome</keyword>
<keyword id="KW-0804">Transcription</keyword>
<keyword id="KW-0805">Transcription regulation</keyword>
<name>ARFW_ORYSI</name>
<proteinExistence type="evidence at transcript level"/>
<dbReference type="EMBL" id="AF140228">
    <property type="protein sequence ID" value="AAG43286.2"/>
    <property type="molecule type" value="mRNA"/>
</dbReference>
<dbReference type="EMBL" id="CM000136">
    <property type="protein sequence ID" value="EAY81120.1"/>
    <property type="molecule type" value="Genomic_DNA"/>
</dbReference>
<dbReference type="SMR" id="A2ZET6"/>
<dbReference type="STRING" id="39946.A2ZET6"/>
<dbReference type="EnsemblPlants" id="BGIOSGA033901-TA">
    <property type="protein sequence ID" value="BGIOSGA033901-PA"/>
    <property type="gene ID" value="BGIOSGA033901"/>
</dbReference>
<dbReference type="Gramene" id="BGIOSGA033901-TA">
    <property type="protein sequence ID" value="BGIOSGA033901-PA"/>
    <property type="gene ID" value="BGIOSGA033901"/>
</dbReference>
<dbReference type="HOGENOM" id="CLU_002626_2_2_1"/>
<dbReference type="OMA" id="SDGRMQM"/>
<dbReference type="Proteomes" id="UP000007015">
    <property type="component" value="Chromosome 11"/>
</dbReference>
<dbReference type="GO" id="GO:0005634">
    <property type="term" value="C:nucleus"/>
    <property type="evidence" value="ECO:0007669"/>
    <property type="project" value="UniProtKB-SubCell"/>
</dbReference>
<dbReference type="GO" id="GO:0003677">
    <property type="term" value="F:DNA binding"/>
    <property type="evidence" value="ECO:0007669"/>
    <property type="project" value="UniProtKB-KW"/>
</dbReference>
<dbReference type="GO" id="GO:0009734">
    <property type="term" value="P:auxin-activated signaling pathway"/>
    <property type="evidence" value="ECO:0007669"/>
    <property type="project" value="UniProtKB-KW"/>
</dbReference>
<dbReference type="GO" id="GO:0006355">
    <property type="term" value="P:regulation of DNA-templated transcription"/>
    <property type="evidence" value="ECO:0007669"/>
    <property type="project" value="InterPro"/>
</dbReference>
<dbReference type="CDD" id="cd10017">
    <property type="entry name" value="B3_DNA"/>
    <property type="match status" value="1"/>
</dbReference>
<dbReference type="FunFam" id="2.30.30.1040:FF:000001">
    <property type="entry name" value="Auxin response factor"/>
    <property type="match status" value="1"/>
</dbReference>
<dbReference type="FunFam" id="2.40.330.10:FF:000001">
    <property type="entry name" value="Auxin response factor"/>
    <property type="match status" value="1"/>
</dbReference>
<dbReference type="FunFam" id="3.10.20.90:FF:000047">
    <property type="entry name" value="Auxin response factor"/>
    <property type="match status" value="1"/>
</dbReference>
<dbReference type="Gene3D" id="2.30.30.1040">
    <property type="match status" value="1"/>
</dbReference>
<dbReference type="Gene3D" id="2.40.330.10">
    <property type="entry name" value="DNA-binding pseudobarrel domain"/>
    <property type="match status" value="1"/>
</dbReference>
<dbReference type="Gene3D" id="3.10.20.90">
    <property type="entry name" value="Phosphatidylinositol 3-kinase Catalytic Subunit, Chain A, domain 1"/>
    <property type="match status" value="1"/>
</dbReference>
<dbReference type="InterPro" id="IPR010525">
    <property type="entry name" value="ARF_dom"/>
</dbReference>
<dbReference type="InterPro" id="IPR044835">
    <property type="entry name" value="ARF_plant"/>
</dbReference>
<dbReference type="InterPro" id="IPR033389">
    <property type="entry name" value="AUX/IAA_dom"/>
</dbReference>
<dbReference type="InterPro" id="IPR003340">
    <property type="entry name" value="B3_DNA-bd"/>
</dbReference>
<dbReference type="InterPro" id="IPR015300">
    <property type="entry name" value="DNA-bd_pseudobarrel_sf"/>
</dbReference>
<dbReference type="InterPro" id="IPR053793">
    <property type="entry name" value="PB1-like"/>
</dbReference>
<dbReference type="PANTHER" id="PTHR31384:SF79">
    <property type="entry name" value="AUXIN RESPONSE FACTOR 2"/>
    <property type="match status" value="1"/>
</dbReference>
<dbReference type="PANTHER" id="PTHR31384">
    <property type="entry name" value="AUXIN RESPONSE FACTOR 4-RELATED"/>
    <property type="match status" value="1"/>
</dbReference>
<dbReference type="Pfam" id="PF06507">
    <property type="entry name" value="ARF_AD"/>
    <property type="match status" value="1"/>
</dbReference>
<dbReference type="Pfam" id="PF02309">
    <property type="entry name" value="AUX_IAA"/>
    <property type="match status" value="1"/>
</dbReference>
<dbReference type="Pfam" id="PF02362">
    <property type="entry name" value="B3"/>
    <property type="match status" value="1"/>
</dbReference>
<dbReference type="SMART" id="SM01019">
    <property type="entry name" value="B3"/>
    <property type="match status" value="1"/>
</dbReference>
<dbReference type="SUPFAM" id="SSF54277">
    <property type="entry name" value="CAD &amp; PB1 domains"/>
    <property type="match status" value="1"/>
</dbReference>
<dbReference type="SUPFAM" id="SSF101936">
    <property type="entry name" value="DNA-binding pseudobarrel domain"/>
    <property type="match status" value="1"/>
</dbReference>
<dbReference type="PROSITE" id="PS50863">
    <property type="entry name" value="B3"/>
    <property type="match status" value="1"/>
</dbReference>
<dbReference type="PROSITE" id="PS51745">
    <property type="entry name" value="PB1"/>
    <property type="match status" value="1"/>
</dbReference>
<organism>
    <name type="scientific">Oryza sativa subsp. indica</name>
    <name type="common">Rice</name>
    <dbReference type="NCBI Taxonomy" id="39946"/>
    <lineage>
        <taxon>Eukaryota</taxon>
        <taxon>Viridiplantae</taxon>
        <taxon>Streptophyta</taxon>
        <taxon>Embryophyta</taxon>
        <taxon>Tracheophyta</taxon>
        <taxon>Spermatophyta</taxon>
        <taxon>Magnoliopsida</taxon>
        <taxon>Liliopsida</taxon>
        <taxon>Poales</taxon>
        <taxon>Poaceae</taxon>
        <taxon>BOP clade</taxon>
        <taxon>Oryzoideae</taxon>
        <taxon>Oryzeae</taxon>
        <taxon>Oryzinae</taxon>
        <taxon>Oryza</taxon>
        <taxon>Oryza sativa</taxon>
    </lineage>
</organism>
<feature type="chain" id="PRO_0000299282" description="Auxin response factor 23">
    <location>
        <begin position="1"/>
        <end position="853"/>
    </location>
</feature>
<feature type="domain" description="PB1" evidence="3">
    <location>
        <begin position="725"/>
        <end position="809"/>
    </location>
</feature>
<feature type="DNA-binding region" description="TF-B3" evidence="2">
    <location>
        <begin position="149"/>
        <end position="251"/>
    </location>
</feature>
<feature type="region of interest" description="Disordered" evidence="4">
    <location>
        <begin position="121"/>
        <end position="141"/>
    </location>
</feature>
<feature type="region of interest" description="Disordered" evidence="4">
    <location>
        <begin position="422"/>
        <end position="471"/>
    </location>
</feature>
<feature type="region of interest" description="Disordered" evidence="4">
    <location>
        <begin position="647"/>
        <end position="723"/>
    </location>
</feature>
<feature type="region of interest" description="Disordered" evidence="4">
    <location>
        <begin position="815"/>
        <end position="853"/>
    </location>
</feature>
<feature type="compositionally biased region" description="Polar residues" evidence="4">
    <location>
        <begin position="425"/>
        <end position="455"/>
    </location>
</feature>
<feature type="compositionally biased region" description="Basic and acidic residues" evidence="4">
    <location>
        <begin position="672"/>
        <end position="686"/>
    </location>
</feature>
<feature type="compositionally biased region" description="Polar residues" evidence="4">
    <location>
        <begin position="706"/>
        <end position="723"/>
    </location>
</feature>
<feature type="compositionally biased region" description="Polar residues" evidence="4">
    <location>
        <begin position="843"/>
        <end position="853"/>
    </location>
</feature>
<feature type="sequence conflict" description="In Ref. 1; AAG43286." evidence="5" ref="1">
    <location>
        <position position="34"/>
    </location>
</feature>
<feature type="sequence conflict" description="In Ref. 1; AAG43286." evidence="5" ref="1">
    <original>V</original>
    <variation>E</variation>
    <location>
        <position position="60"/>
    </location>
</feature>
<feature type="sequence conflict" description="In Ref. 1; AAG43286." evidence="5" ref="1">
    <original>Q</original>
    <variation>R</variation>
    <location>
        <position position="122"/>
    </location>
</feature>
<feature type="sequence conflict" description="In Ref. 1; AAG43286." evidence="5" ref="1">
    <original>G</original>
    <variation>S</variation>
    <location>
        <position position="325"/>
    </location>
</feature>
<feature type="sequence conflict" description="In Ref. 1; AAG43286." evidence="5" ref="1">
    <original>W</original>
    <variation>R</variation>
    <location>
        <position position="481"/>
    </location>
</feature>
<feature type="sequence conflict" description="In Ref. 1; AAG43286." evidence="5" ref="1">
    <original>H</original>
    <variation>L</variation>
    <location>
        <position position="602"/>
    </location>
</feature>
<feature type="sequence conflict" description="In Ref. 1; AAG43286." evidence="5" ref="1">
    <original>L</original>
    <variation>S</variation>
    <location>
        <position position="653"/>
    </location>
</feature>
<feature type="sequence conflict" description="In Ref. 1; AAG43286." evidence="5" ref="1">
    <original>S</original>
    <variation>SSQQAS</variation>
    <location>
        <position position="712"/>
    </location>
</feature>
<feature type="sequence conflict" description="In Ref. 1; AAG43286." evidence="5" ref="1">
    <original>S</original>
    <variation>L</variation>
    <location>
        <position position="820"/>
    </location>
</feature>
<comment type="function">
    <text>Auxin response factors (ARFs) are transcriptional factors that bind specifically to the DNA sequence 5'-TGTCTC-3' found in the auxin-responsive promoter elements (AuxREs).</text>
</comment>
<comment type="subunit">
    <text evidence="1">Homodimers and heterodimers.</text>
</comment>
<comment type="subcellular location">
    <subcellularLocation>
        <location evidence="2">Nucleus</location>
    </subcellularLocation>
</comment>
<comment type="domain">
    <text>Interactions between auxin response factors (ARFs) and Aux/IAA proteins occur through their C-terminal dimerization domains III and IV.</text>
</comment>
<comment type="similarity">
    <text evidence="5">Belongs to the ARF family.</text>
</comment>
<accession>A2ZET6</accession>
<accession>Q9FR78</accession>
<sequence>MATAEVGGGGGEGDAAAAAVARAGGGGGGGGGGGEDALFTELWSACAGPLVTVPRVGEKVFYFPQGHIEQVEASTNQVGEQRMQLYNLPWKILCEVMNVELKAEPDTDEVYAQLTLLPELKQQEDNGSTEEEVPSAPAAGHVRPRVHSFCKTLTASDTSTHGGFSVLRRHADECLPPLDMSRQPPTQELVAKDLHGVEWRFRHIFRGQPRRHLLQSGWSVFVSAKRLVAGDAFIFLRGENGELRVGVRRAMRQQTNVPSSVISSHSMHLGVLATAWHAVNTGTMFTVYYKPRTSPAEFVVPYDRYMESLKRNYSIGMRFKMRFEGEEAPEQRFTGTIVGMGDSDPAGWPESKWRSLKVRWDEASSIPRPERVSPWQIEPAVSPPPVNPLPVPRTKRLRPNATALPADSSAIAKEAATKVVVESEPNGTQRTFQTQENATPKSGFGNSSELESAQKSIMRPSGFDREKNNTPIQWKLGSDGWMQMSKPESYSEMLSGFQPPKDVQTPQGFCSLPEQITAGHSNFWHTVNAQYQDQQSNHNMFPSSWSFMPPNTRLGLNKQNYSMIQEAGVLSQRPGNTKFGNGVYAALPGRGTEQYSGGWFGHMMPNSHMDDTQPRLIKPKPLVVAHGDVQKAKGASCKLFGIHLDSPAKSEPLKSPSSVVYDGTPQTPGATEWRRPDVTEVEKCSDPSKAMKPLDTPQPDSVPEKPSSQQASRNMSCKSQGVSTRSCKKVHKQGIALGRSVDLTKFNGYEELIAELDDMFDFNGELKGPKKEWMVVYTDNEGDMMLVGDDPWIEFCDMVHKIFIYTREEVQRMNPGTLNSRSEDSHANSMERGSVGREMRGCLSTSSLNSENC</sequence>